<accession>C1EZE3</accession>
<feature type="chain" id="PRO_1000164124" description="Phosphatidylglycerol--prolipoprotein diacylglyceryl transferase">
    <location>
        <begin position="1"/>
        <end position="270"/>
    </location>
</feature>
<feature type="transmembrane region" description="Helical" evidence="1">
    <location>
        <begin position="19"/>
        <end position="39"/>
    </location>
</feature>
<feature type="transmembrane region" description="Helical" evidence="1">
    <location>
        <begin position="56"/>
        <end position="76"/>
    </location>
</feature>
<feature type="transmembrane region" description="Helical" evidence="1">
    <location>
        <begin position="92"/>
        <end position="112"/>
    </location>
</feature>
<feature type="transmembrane region" description="Helical" evidence="1">
    <location>
        <begin position="116"/>
        <end position="136"/>
    </location>
</feature>
<feature type="transmembrane region" description="Helical" evidence="1">
    <location>
        <begin position="178"/>
        <end position="198"/>
    </location>
</feature>
<feature type="transmembrane region" description="Helical" evidence="1">
    <location>
        <begin position="206"/>
        <end position="226"/>
    </location>
</feature>
<feature type="transmembrane region" description="Helical" evidence="1">
    <location>
        <begin position="236"/>
        <end position="256"/>
    </location>
</feature>
<feature type="binding site" evidence="1">
    <location>
        <position position="138"/>
    </location>
    <ligand>
        <name>a 1,2-diacyl-sn-glycero-3-phospho-(1'-sn-glycerol)</name>
        <dbReference type="ChEBI" id="CHEBI:64716"/>
    </ligand>
</feature>
<organism>
    <name type="scientific">Bacillus cereus (strain 03BB102)</name>
    <dbReference type="NCBI Taxonomy" id="572264"/>
    <lineage>
        <taxon>Bacteria</taxon>
        <taxon>Bacillati</taxon>
        <taxon>Bacillota</taxon>
        <taxon>Bacilli</taxon>
        <taxon>Bacillales</taxon>
        <taxon>Bacillaceae</taxon>
        <taxon>Bacillus</taxon>
        <taxon>Bacillus cereus group</taxon>
    </lineage>
</organism>
<protein>
    <recommendedName>
        <fullName evidence="1">Phosphatidylglycerol--prolipoprotein diacylglyceryl transferase</fullName>
        <ecNumber evidence="1">2.5.1.145</ecNumber>
    </recommendedName>
</protein>
<comment type="function">
    <text evidence="1">Catalyzes the transfer of the diacylglyceryl group from phosphatidylglycerol to the sulfhydryl group of the N-terminal cysteine of a prolipoprotein, the first step in the formation of mature lipoproteins.</text>
</comment>
<comment type="catalytic activity">
    <reaction evidence="1">
        <text>L-cysteinyl-[prolipoprotein] + a 1,2-diacyl-sn-glycero-3-phospho-(1'-sn-glycerol) = an S-1,2-diacyl-sn-glyceryl-L-cysteinyl-[prolipoprotein] + sn-glycerol 1-phosphate + H(+)</text>
        <dbReference type="Rhea" id="RHEA:56712"/>
        <dbReference type="Rhea" id="RHEA-COMP:14679"/>
        <dbReference type="Rhea" id="RHEA-COMP:14680"/>
        <dbReference type="ChEBI" id="CHEBI:15378"/>
        <dbReference type="ChEBI" id="CHEBI:29950"/>
        <dbReference type="ChEBI" id="CHEBI:57685"/>
        <dbReference type="ChEBI" id="CHEBI:64716"/>
        <dbReference type="ChEBI" id="CHEBI:140658"/>
        <dbReference type="EC" id="2.5.1.145"/>
    </reaction>
</comment>
<comment type="pathway">
    <text evidence="1">Protein modification; lipoprotein biosynthesis (diacylglyceryl transfer).</text>
</comment>
<comment type="subcellular location">
    <subcellularLocation>
        <location evidence="1">Cell membrane</location>
        <topology evidence="1">Multi-pass membrane protein</topology>
    </subcellularLocation>
</comment>
<comment type="similarity">
    <text evidence="1">Belongs to the Lgt family.</text>
</comment>
<dbReference type="EC" id="2.5.1.145" evidence="1"/>
<dbReference type="EMBL" id="CP001407">
    <property type="protein sequence ID" value="ACO29379.1"/>
    <property type="molecule type" value="Genomic_DNA"/>
</dbReference>
<dbReference type="RefSeq" id="WP_000924246.1">
    <property type="nucleotide sequence ID" value="NZ_CP009318.1"/>
</dbReference>
<dbReference type="SMR" id="C1EZE3"/>
<dbReference type="KEGG" id="bcx:BCA_5290"/>
<dbReference type="PATRIC" id="fig|572264.18.peg.5213"/>
<dbReference type="UniPathway" id="UPA00664"/>
<dbReference type="Proteomes" id="UP000002210">
    <property type="component" value="Chromosome"/>
</dbReference>
<dbReference type="GO" id="GO:0005886">
    <property type="term" value="C:plasma membrane"/>
    <property type="evidence" value="ECO:0007669"/>
    <property type="project" value="UniProtKB-SubCell"/>
</dbReference>
<dbReference type="GO" id="GO:0008961">
    <property type="term" value="F:phosphatidylglycerol-prolipoprotein diacylglyceryl transferase activity"/>
    <property type="evidence" value="ECO:0007669"/>
    <property type="project" value="UniProtKB-UniRule"/>
</dbReference>
<dbReference type="GO" id="GO:0042158">
    <property type="term" value="P:lipoprotein biosynthetic process"/>
    <property type="evidence" value="ECO:0007669"/>
    <property type="project" value="UniProtKB-UniRule"/>
</dbReference>
<dbReference type="HAMAP" id="MF_01147">
    <property type="entry name" value="Lgt"/>
    <property type="match status" value="1"/>
</dbReference>
<dbReference type="InterPro" id="IPR001640">
    <property type="entry name" value="Lgt"/>
</dbReference>
<dbReference type="NCBIfam" id="TIGR00544">
    <property type="entry name" value="lgt"/>
    <property type="match status" value="1"/>
</dbReference>
<dbReference type="PANTHER" id="PTHR30589:SF0">
    <property type="entry name" value="PHOSPHATIDYLGLYCEROL--PROLIPOPROTEIN DIACYLGLYCERYL TRANSFERASE"/>
    <property type="match status" value="1"/>
</dbReference>
<dbReference type="PANTHER" id="PTHR30589">
    <property type="entry name" value="PROLIPOPROTEIN DIACYLGLYCERYL TRANSFERASE"/>
    <property type="match status" value="1"/>
</dbReference>
<dbReference type="Pfam" id="PF01790">
    <property type="entry name" value="LGT"/>
    <property type="match status" value="1"/>
</dbReference>
<dbReference type="PROSITE" id="PS01311">
    <property type="entry name" value="LGT"/>
    <property type="match status" value="1"/>
</dbReference>
<proteinExistence type="inferred from homology"/>
<sequence>MLLGSVPQLDRVAVQLGPFPVYWYGIIIGTGVLLGLWLATREGERLGIPKDTFVDLVLIAVPIAILFARMYYVIFEWEYYVQNPSQIINIRQGGLAIHGGLIGAVITGILFAKRRGVSFWKLADIAAPSILLGQAIGRWGNFMNQEAHGDEVTRQFLEGLHLPDFIINQMYIDGVYYHPTFLYESLWNFAGVILLLALRKVNLRRGELFFTYLIWYSIGRFFVEGLRTDSLMLGPLRIAQVMSIGLVVISIIFIIVRRKMGQADKRYSEN</sequence>
<reference key="1">
    <citation type="submission" date="2009-02" db="EMBL/GenBank/DDBJ databases">
        <title>Genome sequence of Bacillus cereus 03BB102.</title>
        <authorList>
            <person name="Dodson R.J."/>
            <person name="Jackson P."/>
            <person name="Munk A.C."/>
            <person name="Brettin T."/>
            <person name="Bruce D."/>
            <person name="Detter C."/>
            <person name="Tapia R."/>
            <person name="Han C."/>
            <person name="Sutton G."/>
            <person name="Sims D."/>
        </authorList>
    </citation>
    <scope>NUCLEOTIDE SEQUENCE [LARGE SCALE GENOMIC DNA]</scope>
    <source>
        <strain>03BB102</strain>
    </source>
</reference>
<keyword id="KW-1003">Cell membrane</keyword>
<keyword id="KW-0472">Membrane</keyword>
<keyword id="KW-0808">Transferase</keyword>
<keyword id="KW-0812">Transmembrane</keyword>
<keyword id="KW-1133">Transmembrane helix</keyword>
<name>LGT_BACC3</name>
<evidence type="ECO:0000255" key="1">
    <source>
        <dbReference type="HAMAP-Rule" id="MF_01147"/>
    </source>
</evidence>
<gene>
    <name evidence="1" type="primary">lgt</name>
    <name type="ordered locus">BCA_5290</name>
</gene>